<gene>
    <name evidence="1" type="primary">lacZ</name>
    <name type="ordered locus">YPDSF_1792</name>
</gene>
<name>BGAL_YERPP</name>
<evidence type="ECO:0000255" key="1">
    <source>
        <dbReference type="HAMAP-Rule" id="MF_01687"/>
    </source>
</evidence>
<accession>A4TLL5</accession>
<keyword id="KW-0326">Glycosidase</keyword>
<keyword id="KW-0378">Hydrolase</keyword>
<keyword id="KW-0460">Magnesium</keyword>
<keyword id="KW-0479">Metal-binding</keyword>
<keyword id="KW-0915">Sodium</keyword>
<feature type="chain" id="PRO_0000367016" description="Beta-galactosidase">
    <location>
        <begin position="1"/>
        <end position="1060"/>
    </location>
</feature>
<feature type="active site" description="Proton donor" evidence="1">
    <location>
        <position position="477"/>
    </location>
</feature>
<feature type="active site" description="Nucleophile" evidence="1">
    <location>
        <position position="553"/>
    </location>
</feature>
<feature type="binding site" evidence="1">
    <location>
        <position position="110"/>
    </location>
    <ligand>
        <name>substrate</name>
    </ligand>
</feature>
<feature type="binding site" evidence="1">
    <location>
        <position position="209"/>
    </location>
    <ligand>
        <name>Na(+)</name>
        <dbReference type="ChEBI" id="CHEBI:29101"/>
    </ligand>
</feature>
<feature type="binding site" evidence="1">
    <location>
        <position position="209"/>
    </location>
    <ligand>
        <name>substrate</name>
    </ligand>
</feature>
<feature type="binding site" evidence="1">
    <location>
        <position position="432"/>
    </location>
    <ligand>
        <name>Mg(2+)</name>
        <dbReference type="ChEBI" id="CHEBI:18420"/>
        <label>1</label>
    </ligand>
</feature>
<feature type="binding site" evidence="1">
    <location>
        <position position="434"/>
    </location>
    <ligand>
        <name>Mg(2+)</name>
        <dbReference type="ChEBI" id="CHEBI:18420"/>
        <label>1</label>
    </ligand>
</feature>
<feature type="binding site" evidence="1">
    <location>
        <position position="477"/>
    </location>
    <ligand>
        <name>Mg(2+)</name>
        <dbReference type="ChEBI" id="CHEBI:18420"/>
        <label>1</label>
    </ligand>
</feature>
<feature type="binding site" evidence="1">
    <location>
        <position position="477"/>
    </location>
    <ligand>
        <name>substrate</name>
    </ligand>
</feature>
<feature type="binding site" evidence="1">
    <location>
        <begin position="553"/>
        <end position="556"/>
    </location>
    <ligand>
        <name>substrate</name>
    </ligand>
</feature>
<feature type="binding site" evidence="1">
    <location>
        <position position="613"/>
    </location>
    <ligand>
        <name>Mg(2+)</name>
        <dbReference type="ChEBI" id="CHEBI:18420"/>
        <label>2</label>
    </ligand>
</feature>
<feature type="binding site" evidence="1">
    <location>
        <position position="617"/>
    </location>
    <ligand>
        <name>Na(+)</name>
        <dbReference type="ChEBI" id="CHEBI:29101"/>
    </ligand>
</feature>
<feature type="binding site" evidence="1">
    <location>
        <position position="620"/>
    </location>
    <ligand>
        <name>Na(+)</name>
        <dbReference type="ChEBI" id="CHEBI:29101"/>
    </ligand>
</feature>
<feature type="binding site" evidence="1">
    <location>
        <position position="620"/>
    </location>
    <ligand>
        <name>substrate</name>
    </ligand>
</feature>
<feature type="binding site" evidence="1">
    <location>
        <position position="1035"/>
    </location>
    <ligand>
        <name>substrate</name>
    </ligand>
</feature>
<feature type="site" description="Transition state stabilizer" evidence="1">
    <location>
        <position position="373"/>
    </location>
</feature>
<feature type="site" description="Transition state stabilizer" evidence="1">
    <location>
        <position position="407"/>
    </location>
</feature>
<protein>
    <recommendedName>
        <fullName evidence="1">Beta-galactosidase</fullName>
        <shortName evidence="1">Beta-gal</shortName>
        <ecNumber evidence="1">3.2.1.23</ecNumber>
    </recommendedName>
    <alternativeName>
        <fullName evidence="1">Lactase</fullName>
    </alternativeName>
</protein>
<organism>
    <name type="scientific">Yersinia pestis (strain Pestoides F)</name>
    <dbReference type="NCBI Taxonomy" id="386656"/>
    <lineage>
        <taxon>Bacteria</taxon>
        <taxon>Pseudomonadati</taxon>
        <taxon>Pseudomonadota</taxon>
        <taxon>Gammaproteobacteria</taxon>
        <taxon>Enterobacterales</taxon>
        <taxon>Yersiniaceae</taxon>
        <taxon>Yersinia</taxon>
    </lineage>
</organism>
<reference key="1">
    <citation type="submission" date="2007-02" db="EMBL/GenBank/DDBJ databases">
        <title>Complete sequence of chromosome of Yersinia pestis Pestoides F.</title>
        <authorList>
            <consortium name="US DOE Joint Genome Institute"/>
            <person name="Copeland A."/>
            <person name="Lucas S."/>
            <person name="Lapidus A."/>
            <person name="Barry K."/>
            <person name="Detter J.C."/>
            <person name="Glavina del Rio T."/>
            <person name="Hammon N."/>
            <person name="Israni S."/>
            <person name="Dalin E."/>
            <person name="Tice H."/>
            <person name="Pitluck S."/>
            <person name="Di Bartolo G."/>
            <person name="Chain P."/>
            <person name="Malfatti S."/>
            <person name="Shin M."/>
            <person name="Vergez L."/>
            <person name="Schmutz J."/>
            <person name="Larimer F."/>
            <person name="Land M."/>
            <person name="Hauser L."/>
            <person name="Worsham P."/>
            <person name="Chu M."/>
            <person name="Bearden S."/>
            <person name="Garcia E."/>
            <person name="Richardson P."/>
        </authorList>
    </citation>
    <scope>NUCLEOTIDE SEQUENCE [LARGE SCALE GENOMIC DNA]</scope>
    <source>
        <strain>Pestoides F</strain>
    </source>
</reference>
<sequence length="1060" mass="122625">MTSQEKVPLQVQLSLPQILSRRDWENPQITQYHRLEAHPPFHSWRDVESAQKDRPSPQQQTLNGLWSFSYFTQPEAVPEHWVRCDLAEAKPLPVPANWQLHGYDAPIYTNIQYPIPVNPPRVPDLNPTGCYSRDFTLEPSWLASGKTRIIFDGVSSAFYLWCNGQWVGYSQDSRLPAEFDLTPYLQAGSNRIAVLVLRWSDGSYLEDQDMWRMSGIFRDVKLLHKPEIHLRDIHIMTHLSPEFTSANLEVMAAVNIPSLQLNDPQVTGSYQLRVQLWLADKLVASLQQPLGTQAIDERGPYTDRTQLVLRIDQPLLWSAEQPTLYRAVVSLLNHQQELIEAEAYDVGFRQVAIHQGLLKINGKAVLIRGVNRHEHHPQTGQAIDEESLLQDILLMKQHNFNAVRCSHYPNHPLWYRLCDRYGLYVVDEANIETHGMQPMSRLSDDPSWFSAFSERVTRMVQRDRNHPCIIIWSLGNESGHGATHDALYRWIKTNDPTRPVQYEGGGANTLATDILCPMYARVDEDQPFPAVPKWSIKKWIGLPNESRPLILCEYAHAMGNSFGGFARYWQAFRQYPRLQGGFIWDWVDQSLTHHNDHGQPYWAYGGDFGDTPNDRQFCMNGLVFPDRSPHPSLYEAQCAQQFFQFSLLSTTPLVINITSEYLFRESDNEQLYWRIMLEGESVLEGSQPLNLSPESSQCYRLAEKLPTLNKPGQLWLNVEIRQPKETPWSPAQHRSAWHQWRLPQPLFSPSSDLTNATAHYAPQLQHNLQLQHDLQLQQDEQHIKVTYQQQCWQFSRQTGRLAQWWVADKPMLLRPLQDQFVRAPLDNDIGISEATHIDPNAWVERWKKAGMYQLQQRCLSLHVDHLSHSVQISAEYGYEFEQEPLLHSHWVYRFDRHGRMTIDVNVRIATSLPAPARIGMCCQLADISPTVEWLGLGPHENYPDRQLAAQYGHWSLPLEQMHTAYIFPSENGLRCNTHTLNYGRWTLTGDFHFGISRYSTQQLMVTSHQHLLEPEEGTWLNIDGFHMGVGGDDSWSPSVHIDDILTRETYQYQICWQYKV</sequence>
<proteinExistence type="inferred from homology"/>
<comment type="catalytic activity">
    <reaction evidence="1">
        <text>Hydrolysis of terminal non-reducing beta-D-galactose residues in beta-D-galactosides.</text>
        <dbReference type="EC" id="3.2.1.23"/>
    </reaction>
</comment>
<comment type="cofactor">
    <cofactor evidence="1">
        <name>Mg(2+)</name>
        <dbReference type="ChEBI" id="CHEBI:18420"/>
    </cofactor>
    <text evidence="1">Binds 2 magnesium ions per monomer.</text>
</comment>
<comment type="cofactor">
    <cofactor evidence="1">
        <name>Na(+)</name>
        <dbReference type="ChEBI" id="CHEBI:29101"/>
    </cofactor>
    <text evidence="1">Binds 1 sodium ion per monomer.</text>
</comment>
<comment type="subunit">
    <text evidence="1">Homotetramer.</text>
</comment>
<comment type="similarity">
    <text evidence="1">Belongs to the glycosyl hydrolase 2 family.</text>
</comment>
<dbReference type="EC" id="3.2.1.23" evidence="1"/>
<dbReference type="EMBL" id="CP000668">
    <property type="protein sequence ID" value="ABP40177.1"/>
    <property type="molecule type" value="Genomic_DNA"/>
</dbReference>
<dbReference type="RefSeq" id="WP_002214048.1">
    <property type="nucleotide sequence ID" value="NZ_CP009715.1"/>
</dbReference>
<dbReference type="SMR" id="A4TLL5"/>
<dbReference type="CAZy" id="GH2">
    <property type="family name" value="Glycoside Hydrolase Family 2"/>
</dbReference>
<dbReference type="KEGG" id="ypp:YPDSF_1792"/>
<dbReference type="PATRIC" id="fig|386656.14.peg.3247"/>
<dbReference type="GO" id="GO:0009341">
    <property type="term" value="C:beta-galactosidase complex"/>
    <property type="evidence" value="ECO:0007669"/>
    <property type="project" value="InterPro"/>
</dbReference>
<dbReference type="GO" id="GO:0004565">
    <property type="term" value="F:beta-galactosidase activity"/>
    <property type="evidence" value="ECO:0007669"/>
    <property type="project" value="UniProtKB-EC"/>
</dbReference>
<dbReference type="GO" id="GO:0030246">
    <property type="term" value="F:carbohydrate binding"/>
    <property type="evidence" value="ECO:0007669"/>
    <property type="project" value="InterPro"/>
</dbReference>
<dbReference type="GO" id="GO:0000287">
    <property type="term" value="F:magnesium ion binding"/>
    <property type="evidence" value="ECO:0007669"/>
    <property type="project" value="UniProtKB-UniRule"/>
</dbReference>
<dbReference type="GO" id="GO:0005990">
    <property type="term" value="P:lactose catabolic process"/>
    <property type="evidence" value="ECO:0007669"/>
    <property type="project" value="TreeGrafter"/>
</dbReference>
<dbReference type="FunFam" id="2.60.120.260:FF:000058">
    <property type="entry name" value="Beta-galactosidase"/>
    <property type="match status" value="1"/>
</dbReference>
<dbReference type="FunFam" id="3.20.20.80:FF:000018">
    <property type="entry name" value="Beta-galactosidase"/>
    <property type="match status" value="1"/>
</dbReference>
<dbReference type="Gene3D" id="2.70.98.10">
    <property type="match status" value="1"/>
</dbReference>
<dbReference type="Gene3D" id="2.60.120.260">
    <property type="entry name" value="Galactose-binding domain-like"/>
    <property type="match status" value="1"/>
</dbReference>
<dbReference type="Gene3D" id="3.20.20.80">
    <property type="entry name" value="Glycosidases"/>
    <property type="match status" value="1"/>
</dbReference>
<dbReference type="Gene3D" id="2.60.40.10">
    <property type="entry name" value="Immunoglobulins"/>
    <property type="match status" value="2"/>
</dbReference>
<dbReference type="HAMAP" id="MF_01687">
    <property type="entry name" value="Beta_gal"/>
    <property type="match status" value="1"/>
</dbReference>
<dbReference type="InterPro" id="IPR004199">
    <property type="entry name" value="B-gal_small/dom_5"/>
</dbReference>
<dbReference type="InterPro" id="IPR050347">
    <property type="entry name" value="Bact_Beta-galactosidase"/>
</dbReference>
<dbReference type="InterPro" id="IPR036156">
    <property type="entry name" value="Beta-gal/glucu_dom_sf"/>
</dbReference>
<dbReference type="InterPro" id="IPR011013">
    <property type="entry name" value="Gal_mutarotase_sf_dom"/>
</dbReference>
<dbReference type="InterPro" id="IPR008979">
    <property type="entry name" value="Galactose-bd-like_sf"/>
</dbReference>
<dbReference type="InterPro" id="IPR014718">
    <property type="entry name" value="GH-type_carb-bd"/>
</dbReference>
<dbReference type="InterPro" id="IPR006101">
    <property type="entry name" value="Glyco_hydro_2"/>
</dbReference>
<dbReference type="InterPro" id="IPR023232">
    <property type="entry name" value="Glyco_hydro_2_AS"/>
</dbReference>
<dbReference type="InterPro" id="IPR023933">
    <property type="entry name" value="Glyco_hydro_2_beta_Galsidase"/>
</dbReference>
<dbReference type="InterPro" id="IPR006103">
    <property type="entry name" value="Glyco_hydro_2_cat"/>
</dbReference>
<dbReference type="InterPro" id="IPR023230">
    <property type="entry name" value="Glyco_hydro_2_CS"/>
</dbReference>
<dbReference type="InterPro" id="IPR006102">
    <property type="entry name" value="Glyco_hydro_2_Ig-like"/>
</dbReference>
<dbReference type="InterPro" id="IPR006104">
    <property type="entry name" value="Glyco_hydro_2_N"/>
</dbReference>
<dbReference type="InterPro" id="IPR017853">
    <property type="entry name" value="Glycoside_hydrolase_SF"/>
</dbReference>
<dbReference type="InterPro" id="IPR013783">
    <property type="entry name" value="Ig-like_fold"/>
</dbReference>
<dbReference type="InterPro" id="IPR032312">
    <property type="entry name" value="LacZ_4"/>
</dbReference>
<dbReference type="NCBIfam" id="NF007074">
    <property type="entry name" value="PRK09525.1"/>
    <property type="match status" value="1"/>
</dbReference>
<dbReference type="PANTHER" id="PTHR46323">
    <property type="entry name" value="BETA-GALACTOSIDASE"/>
    <property type="match status" value="1"/>
</dbReference>
<dbReference type="PANTHER" id="PTHR46323:SF2">
    <property type="entry name" value="BETA-GALACTOSIDASE"/>
    <property type="match status" value="1"/>
</dbReference>
<dbReference type="Pfam" id="PF02929">
    <property type="entry name" value="Bgal_small_N"/>
    <property type="match status" value="1"/>
</dbReference>
<dbReference type="Pfam" id="PF00703">
    <property type="entry name" value="Glyco_hydro_2"/>
    <property type="match status" value="1"/>
</dbReference>
<dbReference type="Pfam" id="PF02836">
    <property type="entry name" value="Glyco_hydro_2_C"/>
    <property type="match status" value="1"/>
</dbReference>
<dbReference type="Pfam" id="PF02837">
    <property type="entry name" value="Glyco_hydro_2_N"/>
    <property type="match status" value="1"/>
</dbReference>
<dbReference type="Pfam" id="PF16353">
    <property type="entry name" value="LacZ_4"/>
    <property type="match status" value="1"/>
</dbReference>
<dbReference type="PRINTS" id="PR00132">
    <property type="entry name" value="GLHYDRLASE2"/>
</dbReference>
<dbReference type="SMART" id="SM01038">
    <property type="entry name" value="Bgal_small_N"/>
    <property type="match status" value="1"/>
</dbReference>
<dbReference type="SUPFAM" id="SSF51445">
    <property type="entry name" value="(Trans)glycosidases"/>
    <property type="match status" value="1"/>
</dbReference>
<dbReference type="SUPFAM" id="SSF49303">
    <property type="entry name" value="beta-Galactosidase/glucuronidase domain"/>
    <property type="match status" value="2"/>
</dbReference>
<dbReference type="SUPFAM" id="SSF74650">
    <property type="entry name" value="Galactose mutarotase-like"/>
    <property type="match status" value="1"/>
</dbReference>
<dbReference type="SUPFAM" id="SSF49785">
    <property type="entry name" value="Galactose-binding domain-like"/>
    <property type="match status" value="1"/>
</dbReference>
<dbReference type="PROSITE" id="PS00719">
    <property type="entry name" value="GLYCOSYL_HYDROL_F2_1"/>
    <property type="match status" value="1"/>
</dbReference>
<dbReference type="PROSITE" id="PS00608">
    <property type="entry name" value="GLYCOSYL_HYDROL_F2_2"/>
    <property type="match status" value="1"/>
</dbReference>